<protein>
    <recommendedName>
        <fullName>U7-theraphotoxin-Hhn1a 2</fullName>
        <shortName>U7-TRTX-Hhn1a</shortName>
    </recommendedName>
    <alternativeName>
        <fullName>Hainantoxin-XIII.2</fullName>
        <shortName>HNTX-XIII.2</shortName>
    </alternativeName>
</protein>
<feature type="signal peptide" evidence="2">
    <location>
        <begin position="1"/>
        <end position="19"/>
    </location>
</feature>
<feature type="propeptide" id="PRO_0000400681" evidence="1">
    <location>
        <begin position="20"/>
        <end position="50"/>
    </location>
</feature>
<feature type="peptide" id="PRO_0000400682" description="U7-theraphotoxin-Hhn1a 2">
    <location>
        <begin position="51"/>
        <end position="90"/>
    </location>
</feature>
<feature type="disulfide bond" evidence="1">
    <location>
        <begin position="51"/>
        <end position="65"/>
    </location>
</feature>
<feature type="disulfide bond" evidence="1">
    <location>
        <begin position="58"/>
        <end position="70"/>
    </location>
</feature>
<feature type="disulfide bond" evidence="1">
    <location>
        <begin position="64"/>
        <end position="81"/>
    </location>
</feature>
<dbReference type="EMBL" id="GU292978">
    <property type="protein sequence ID" value="ADB56794.1"/>
    <property type="molecule type" value="mRNA"/>
</dbReference>
<dbReference type="SMR" id="D2Y2A1"/>
<dbReference type="ArachnoServer" id="AS001986">
    <property type="toxin name" value="U7-theraphotoxin-Hhn1a"/>
</dbReference>
<dbReference type="GO" id="GO:0005576">
    <property type="term" value="C:extracellular region"/>
    <property type="evidence" value="ECO:0007669"/>
    <property type="project" value="UniProtKB-SubCell"/>
</dbReference>
<dbReference type="GO" id="GO:0008200">
    <property type="term" value="F:ion channel inhibitor activity"/>
    <property type="evidence" value="ECO:0007669"/>
    <property type="project" value="InterPro"/>
</dbReference>
<dbReference type="GO" id="GO:0090729">
    <property type="term" value="F:toxin activity"/>
    <property type="evidence" value="ECO:0007669"/>
    <property type="project" value="UniProtKB-KW"/>
</dbReference>
<dbReference type="InterPro" id="IPR011696">
    <property type="entry name" value="Huwentoxin-1"/>
</dbReference>
<dbReference type="Pfam" id="PF07740">
    <property type="entry name" value="Toxin_12"/>
    <property type="match status" value="1"/>
</dbReference>
<dbReference type="SUPFAM" id="SSF57059">
    <property type="entry name" value="omega toxin-like"/>
    <property type="match status" value="1"/>
</dbReference>
<keyword id="KW-1015">Disulfide bond</keyword>
<keyword id="KW-0872">Ion channel impairing toxin</keyword>
<keyword id="KW-0960">Knottin</keyword>
<keyword id="KW-0964">Secreted</keyword>
<keyword id="KW-0732">Signal</keyword>
<keyword id="KW-0800">Toxin</keyword>
<proteinExistence type="evidence at transcript level"/>
<sequence>MKIAIFTVVLALAVFAVLSFGWEANEKALSEEFTELIHEKEAASETEARECRYFWGECHDHMPCCDWLVCRYKWPITYNICVWNRTFPEK</sequence>
<evidence type="ECO:0000250" key="1"/>
<evidence type="ECO:0000255" key="2"/>
<evidence type="ECO:0000305" key="3"/>
<name>H13A2_CYRHA</name>
<organism>
    <name type="scientific">Cyriopagopus hainanus</name>
    <name type="common">Chinese bird spider</name>
    <name type="synonym">Haplopelma hainanum</name>
    <dbReference type="NCBI Taxonomy" id="209901"/>
    <lineage>
        <taxon>Eukaryota</taxon>
        <taxon>Metazoa</taxon>
        <taxon>Ecdysozoa</taxon>
        <taxon>Arthropoda</taxon>
        <taxon>Chelicerata</taxon>
        <taxon>Arachnida</taxon>
        <taxon>Araneae</taxon>
        <taxon>Mygalomorphae</taxon>
        <taxon>Theraphosidae</taxon>
        <taxon>Haplopelma</taxon>
    </lineage>
</organism>
<comment type="function">
    <text evidence="1">Ion channel inhibitor.</text>
</comment>
<comment type="subcellular location">
    <subcellularLocation>
        <location evidence="1">Secreted</location>
    </subcellularLocation>
</comment>
<comment type="tissue specificity">
    <text>Expressed by the venom gland.</text>
</comment>
<comment type="domain">
    <text evidence="1">The presence of a 'disulfide through disulfide knot' structurally defines this protein as a knottin.</text>
</comment>
<comment type="similarity">
    <text evidence="3">Belongs to the neurotoxin 10 (Hwtx-1) family. 13 (Hntx-13) subfamily.</text>
</comment>
<accession>D2Y2A1</accession>
<reference key="1">
    <citation type="journal article" date="2010" name="J. Proteome Res.">
        <title>Molecular diversification of peptide toxins from the tarantula Haplopelma hainanum (Ornithoctonus hainana) venom based on transcriptomic, peptidomic, and genomic analyses.</title>
        <authorList>
            <person name="Tang X."/>
            <person name="Zhang Y."/>
            <person name="Hu W."/>
            <person name="Xu D."/>
            <person name="Tao H."/>
            <person name="Yang X."/>
            <person name="Li Y."/>
            <person name="Jiang L."/>
            <person name="Liang S."/>
        </authorList>
    </citation>
    <scope>NUCLEOTIDE SEQUENCE [LARGE SCALE MRNA]</scope>
    <source>
        <tissue>Venom gland</tissue>
    </source>
</reference>